<name>PMI28_ORYSJ</name>
<gene>
    <name evidence="8" type="primary">PMEI28</name>
    <name evidence="11" type="ordered locus">Os08g0108100</name>
    <name evidence="9" type="ordered locus">LOC_Os08g01670</name>
    <name evidence="10" type="ORF">P0450B04.30</name>
</gene>
<dbReference type="EMBL" id="AP004462">
    <property type="protein sequence ID" value="BAD09396.1"/>
    <property type="status" value="ALT_INIT"/>
    <property type="molecule type" value="Genomic_DNA"/>
</dbReference>
<dbReference type="EMBL" id="AP008214">
    <property type="protein sequence ID" value="BAF22717.1"/>
    <property type="molecule type" value="Genomic_DNA"/>
</dbReference>
<dbReference type="EMBL" id="AP014964">
    <property type="protein sequence ID" value="BAT03473.1"/>
    <property type="molecule type" value="Genomic_DNA"/>
</dbReference>
<dbReference type="EMBL" id="AK070037">
    <property type="protein sequence ID" value="BAG91735.1"/>
    <property type="molecule type" value="mRNA"/>
</dbReference>
<dbReference type="RefSeq" id="XP_015650603.1">
    <property type="nucleotide sequence ID" value="XM_015795117.1"/>
</dbReference>
<dbReference type="SMR" id="Q0J8J8"/>
<dbReference type="FunCoup" id="Q0J8J8">
    <property type="interactions" value="922"/>
</dbReference>
<dbReference type="STRING" id="39947.Q0J8J8"/>
<dbReference type="GlyCosmos" id="Q0J8J8">
    <property type="glycosylation" value="3 sites, No reported glycans"/>
</dbReference>
<dbReference type="PaxDb" id="39947-Q0J8J8"/>
<dbReference type="EnsemblPlants" id="Os08t0108100-01">
    <property type="protein sequence ID" value="Os08t0108100-01"/>
    <property type="gene ID" value="Os08g0108100"/>
</dbReference>
<dbReference type="Gramene" id="Os08t0108100-01">
    <property type="protein sequence ID" value="Os08t0108100-01"/>
    <property type="gene ID" value="Os08g0108100"/>
</dbReference>
<dbReference type="KEGG" id="dosa:Os08g0108100"/>
<dbReference type="eggNOG" id="ENOG502RXIR">
    <property type="taxonomic scope" value="Eukaryota"/>
</dbReference>
<dbReference type="HOGENOM" id="CLU_033761_5_1_1"/>
<dbReference type="InParanoid" id="Q0J8J8"/>
<dbReference type="OMA" id="TYPELCV"/>
<dbReference type="OrthoDB" id="773291at2759"/>
<dbReference type="Proteomes" id="UP000000763">
    <property type="component" value="Chromosome 8"/>
</dbReference>
<dbReference type="Proteomes" id="UP000059680">
    <property type="component" value="Chromosome 8"/>
</dbReference>
<dbReference type="GO" id="GO:0048046">
    <property type="term" value="C:apoplast"/>
    <property type="evidence" value="ECO:0007669"/>
    <property type="project" value="UniProtKB-SubCell"/>
</dbReference>
<dbReference type="GO" id="GO:0009505">
    <property type="term" value="C:plant-type cell wall"/>
    <property type="evidence" value="ECO:0000318"/>
    <property type="project" value="GO_Central"/>
</dbReference>
<dbReference type="GO" id="GO:0004857">
    <property type="term" value="F:enzyme inhibitor activity"/>
    <property type="evidence" value="ECO:0000318"/>
    <property type="project" value="GO_Central"/>
</dbReference>
<dbReference type="GO" id="GO:0046910">
    <property type="term" value="F:pectinesterase inhibitor activity"/>
    <property type="evidence" value="ECO:0000314"/>
    <property type="project" value="UniProtKB"/>
</dbReference>
<dbReference type="GO" id="GO:0009827">
    <property type="term" value="P:plant-type cell wall modification"/>
    <property type="evidence" value="ECO:0000318"/>
    <property type="project" value="GO_Central"/>
</dbReference>
<dbReference type="CDD" id="cd14859">
    <property type="entry name" value="PMEI_like"/>
    <property type="match status" value="1"/>
</dbReference>
<dbReference type="FunFam" id="1.20.140.40:FF:000011">
    <property type="entry name" value="Cell wall / vacuolar inhibitor of fructosidase 2"/>
    <property type="match status" value="1"/>
</dbReference>
<dbReference type="Gene3D" id="1.20.140.40">
    <property type="entry name" value="Invertase/pectin methylesterase inhibitor family protein"/>
    <property type="match status" value="1"/>
</dbReference>
<dbReference type="InterPro" id="IPR035513">
    <property type="entry name" value="Invertase/methylesterase_inhib"/>
</dbReference>
<dbReference type="InterPro" id="IPR006501">
    <property type="entry name" value="Pectinesterase_inhib_dom"/>
</dbReference>
<dbReference type="NCBIfam" id="TIGR01614">
    <property type="entry name" value="PME_inhib"/>
    <property type="match status" value="1"/>
</dbReference>
<dbReference type="PANTHER" id="PTHR35357:SF8">
    <property type="entry name" value="OS01G0111000 PROTEIN"/>
    <property type="match status" value="1"/>
</dbReference>
<dbReference type="PANTHER" id="PTHR35357">
    <property type="entry name" value="OS02G0537100 PROTEIN"/>
    <property type="match status" value="1"/>
</dbReference>
<dbReference type="Pfam" id="PF04043">
    <property type="entry name" value="PMEI"/>
    <property type="match status" value="1"/>
</dbReference>
<dbReference type="SMART" id="SM00856">
    <property type="entry name" value="PMEI"/>
    <property type="match status" value="1"/>
</dbReference>
<dbReference type="SUPFAM" id="SSF101148">
    <property type="entry name" value="Plant invertase/pectin methylesterase inhibitor"/>
    <property type="match status" value="1"/>
</dbReference>
<feature type="signal peptide" evidence="3">
    <location>
        <begin position="1"/>
        <end position="25"/>
    </location>
</feature>
<feature type="chain" id="PRO_5009341578" description="Pectinesterase inhibitor 28" evidence="3">
    <location>
        <begin position="26"/>
        <end position="227"/>
    </location>
</feature>
<feature type="region of interest" description="Disordered" evidence="5">
    <location>
        <begin position="28"/>
        <end position="50"/>
    </location>
</feature>
<feature type="compositionally biased region" description="Basic residues" evidence="5">
    <location>
        <begin position="34"/>
        <end position="43"/>
    </location>
</feature>
<feature type="glycosylation site" description="N-linked (GlcNAc...) asparagine" evidence="4">
    <location>
        <position position="67"/>
    </location>
</feature>
<feature type="glycosylation site" description="N-linked (GlcNAc...) asparagine" evidence="4">
    <location>
        <position position="104"/>
    </location>
</feature>
<feature type="glycosylation site" description="N-linked (GlcNAc...) asparagine" evidence="4">
    <location>
        <position position="117"/>
    </location>
</feature>
<feature type="disulfide bond" evidence="2">
    <location>
        <begin position="66"/>
        <end position="75"/>
    </location>
</feature>
<feature type="disulfide bond" evidence="2">
    <location>
        <begin position="139"/>
        <end position="179"/>
    </location>
</feature>
<reference key="1">
    <citation type="journal article" date="2005" name="Nature">
        <title>The map-based sequence of the rice genome.</title>
        <authorList>
            <consortium name="International rice genome sequencing project (IRGSP)"/>
        </authorList>
    </citation>
    <scope>NUCLEOTIDE SEQUENCE [LARGE SCALE GENOMIC DNA]</scope>
    <source>
        <strain>cv. Nipponbare</strain>
    </source>
</reference>
<reference key="2">
    <citation type="journal article" date="2008" name="Nucleic Acids Res.">
        <title>The rice annotation project database (RAP-DB): 2008 update.</title>
        <authorList>
            <consortium name="The rice annotation project (RAP)"/>
        </authorList>
    </citation>
    <scope>GENOME REANNOTATION</scope>
    <source>
        <strain>cv. Nipponbare</strain>
    </source>
</reference>
<reference key="3">
    <citation type="journal article" date="2013" name="Rice">
        <title>Improvement of the Oryza sativa Nipponbare reference genome using next generation sequence and optical map data.</title>
        <authorList>
            <person name="Kawahara Y."/>
            <person name="de la Bastide M."/>
            <person name="Hamilton J.P."/>
            <person name="Kanamori H."/>
            <person name="McCombie W.R."/>
            <person name="Ouyang S."/>
            <person name="Schwartz D.C."/>
            <person name="Tanaka T."/>
            <person name="Wu J."/>
            <person name="Zhou S."/>
            <person name="Childs K.L."/>
            <person name="Davidson R.M."/>
            <person name="Lin H."/>
            <person name="Quesada-Ocampo L."/>
            <person name="Vaillancourt B."/>
            <person name="Sakai H."/>
            <person name="Lee S.S."/>
            <person name="Kim J."/>
            <person name="Numa H."/>
            <person name="Itoh T."/>
            <person name="Buell C.R."/>
            <person name="Matsumoto T."/>
        </authorList>
    </citation>
    <scope>GENOME REANNOTATION</scope>
    <source>
        <strain>cv. Nipponbare</strain>
    </source>
</reference>
<reference key="4">
    <citation type="journal article" date="2003" name="Science">
        <title>Collection, mapping, and annotation of over 28,000 cDNA clones from japonica rice.</title>
        <authorList>
            <consortium name="The rice full-length cDNA consortium"/>
        </authorList>
    </citation>
    <scope>NUCLEOTIDE SEQUENCE [LARGE SCALE MRNA]</scope>
    <source>
        <strain>cv. Nipponbare</strain>
    </source>
</reference>
<reference key="5">
    <citation type="journal article" date="2016" name="Plant Physiol. Biochem.">
        <title>Molecular and biochemical characterization of rice pectin methylesterase inhibitors (OsPMEIs).</title>
        <authorList>
            <person name="Nguyen H.P."/>
            <person name="Jeong H.Y."/>
            <person name="Kim H."/>
            <person name="Kim Y.C."/>
            <person name="Lee C."/>
        </authorList>
    </citation>
    <scope>INDUCTION</scope>
    <scope>GENE FAMILY</scope>
    <scope>NOMENCLATURE</scope>
</reference>
<reference key="6">
    <citation type="journal article" date="2017" name="J. Plant Physiol.">
        <title>Rice pectin methylesterase inhibitor28 (OsPMEI28) encodes a functional PMEI and its overexpression results in a dwarf phenotype through increased pectin methylesterification levels.</title>
        <authorList>
            <person name="Nguyen H.P."/>
            <person name="Jeong H.Y."/>
            <person name="Jeon S.H."/>
            <person name="Kim D."/>
            <person name="Lee C."/>
        </authorList>
    </citation>
    <scope>FUNCTION</scope>
    <scope>TISSUE SPECIFICITY</scope>
</reference>
<comment type="function">
    <text evidence="7">Pectin methylesterase (PME) inhibitor that inhibits PME in vitro. Functions as a critical structural modulator by regulating the degree of pectin methylesterification and the physiochemical properties of the cell wall components.</text>
</comment>
<comment type="subcellular location">
    <subcellularLocation>
        <location evidence="1">Secreted</location>
        <location evidence="1">Extracellular space</location>
        <location evidence="1">Apoplast</location>
    </subcellularLocation>
</comment>
<comment type="tissue specificity">
    <text evidence="7">Expressed in roots, leaves, culms and flag leaves.</text>
</comment>
<comment type="induction">
    <text evidence="6">Induced by cold stress. Down-regulated by drought stress.</text>
</comment>
<comment type="miscellaneous">
    <text evidence="7">Plants over-expressing PMEI28 are dwarf and have shortened culm length, due to increased level of pectin methylesterification.</text>
</comment>
<comment type="similarity">
    <text evidence="9">Belongs to the PMEI family.</text>
</comment>
<comment type="sequence caution" evidence="9">
    <conflict type="erroneous initiation">
        <sequence resource="EMBL-CDS" id="BAD09396"/>
    </conflict>
    <text>Truncated N-terminus.</text>
</comment>
<keyword id="KW-0052">Apoplast</keyword>
<keyword id="KW-1015">Disulfide bond</keyword>
<keyword id="KW-0325">Glycoprotein</keyword>
<keyword id="KW-0341">Growth regulation</keyword>
<keyword id="KW-1185">Reference proteome</keyword>
<keyword id="KW-0964">Secreted</keyword>
<keyword id="KW-0732">Signal</keyword>
<proteinExistence type="evidence at transcript level"/>
<organism>
    <name type="scientific">Oryza sativa subsp. japonica</name>
    <name type="common">Rice</name>
    <dbReference type="NCBI Taxonomy" id="39947"/>
    <lineage>
        <taxon>Eukaryota</taxon>
        <taxon>Viridiplantae</taxon>
        <taxon>Streptophyta</taxon>
        <taxon>Embryophyta</taxon>
        <taxon>Tracheophyta</taxon>
        <taxon>Spermatophyta</taxon>
        <taxon>Magnoliopsida</taxon>
        <taxon>Liliopsida</taxon>
        <taxon>Poales</taxon>
        <taxon>Poaceae</taxon>
        <taxon>BOP clade</taxon>
        <taxon>Oryzoideae</taxon>
        <taxon>Oryzeae</taxon>
        <taxon>Oryzinae</taxon>
        <taxon>Oryza</taxon>
        <taxon>Oryza sativa</taxon>
    </lineage>
</organism>
<protein>
    <recommendedName>
        <fullName evidence="9">Pectinesterase inhibitor 28</fullName>
    </recommendedName>
    <alternativeName>
        <fullName evidence="8">Pectin methylesterase inhibitor 28</fullName>
        <shortName evidence="8">OsPMEI28</shortName>
    </alternativeName>
</protein>
<sequence>MASSMAPAAAMAILLLALLMPATLCSRSGPPSSKHGHGGHAKRAPPPASPVVPVAPQAAALVRATCNSTAYYDVCVSALAADPSSTTADVRGLSAIAVSVAAANASGAAQAAAALANGTAPLAAAAAGDGTVQALLRACAGKYGDARDALAAAKESMGQQDYDLATVHVSAGAEYPQVCKALFRRQRPGAYPAELAAREEALNKLCSVALDIIALLTSSPASNNNNS</sequence>
<evidence type="ECO:0000250" key="1">
    <source>
        <dbReference type="UniProtKB" id="Q6ETW4"/>
    </source>
</evidence>
<evidence type="ECO:0000250" key="2">
    <source>
        <dbReference type="UniProtKB" id="Q9LNF2"/>
    </source>
</evidence>
<evidence type="ECO:0000255" key="3"/>
<evidence type="ECO:0000255" key="4">
    <source>
        <dbReference type="PROSITE-ProRule" id="PRU00498"/>
    </source>
</evidence>
<evidence type="ECO:0000256" key="5">
    <source>
        <dbReference type="SAM" id="MobiDB-lite"/>
    </source>
</evidence>
<evidence type="ECO:0000269" key="6">
    <source>
    </source>
</evidence>
<evidence type="ECO:0000269" key="7">
    <source>
    </source>
</evidence>
<evidence type="ECO:0000303" key="8">
    <source>
    </source>
</evidence>
<evidence type="ECO:0000305" key="9"/>
<evidence type="ECO:0000312" key="10">
    <source>
        <dbReference type="EMBL" id="BAD09396.1"/>
    </source>
</evidence>
<evidence type="ECO:0000312" key="11">
    <source>
        <dbReference type="EMBL" id="BAF22717.1"/>
    </source>
</evidence>
<accession>Q0J8J8</accession>
<accession>Q6ZD64</accession>